<proteinExistence type="inferred from homology"/>
<reference key="1">
    <citation type="journal article" date="2005" name="Proc. Natl. Acad. Sci. U.S.A.">
        <title>Whole genome sequence of Staphylococcus saprophyticus reveals the pathogenesis of uncomplicated urinary tract infection.</title>
        <authorList>
            <person name="Kuroda M."/>
            <person name="Yamashita A."/>
            <person name="Hirakawa H."/>
            <person name="Kumano M."/>
            <person name="Morikawa K."/>
            <person name="Higashide M."/>
            <person name="Maruyama A."/>
            <person name="Inose Y."/>
            <person name="Matoba K."/>
            <person name="Toh H."/>
            <person name="Kuhara S."/>
            <person name="Hattori M."/>
            <person name="Ohta T."/>
        </authorList>
    </citation>
    <scope>NUCLEOTIDE SEQUENCE [LARGE SCALE GENOMIC DNA]</scope>
    <source>
        <strain>ATCC 15305 / DSM 20229 / NCIMB 8711 / NCTC 7292 / S-41</strain>
    </source>
</reference>
<protein>
    <recommendedName>
        <fullName>Sodium-dependent dicarboxylate transporter SdcS</fullName>
    </recommendedName>
    <alternativeName>
        <fullName>Na(+)/dicarboxylate symporter</fullName>
    </alternativeName>
</protein>
<dbReference type="EMBL" id="AP008934">
    <property type="protein sequence ID" value="BAE18020.1"/>
    <property type="molecule type" value="Genomic_DNA"/>
</dbReference>
<dbReference type="RefSeq" id="WP_011302754.1">
    <property type="nucleotide sequence ID" value="NZ_MTGA01000031.1"/>
</dbReference>
<dbReference type="SMR" id="Q49YW0"/>
<dbReference type="GeneID" id="3617071"/>
<dbReference type="KEGG" id="ssp:SSP0875"/>
<dbReference type="PATRIC" id="fig|342451.11.peg.874"/>
<dbReference type="eggNOG" id="COG0471">
    <property type="taxonomic scope" value="Bacteria"/>
</dbReference>
<dbReference type="HOGENOM" id="CLU_005170_0_0_9"/>
<dbReference type="OrthoDB" id="9766267at2"/>
<dbReference type="Proteomes" id="UP000006371">
    <property type="component" value="Chromosome"/>
</dbReference>
<dbReference type="GO" id="GO:0005886">
    <property type="term" value="C:plasma membrane"/>
    <property type="evidence" value="ECO:0007669"/>
    <property type="project" value="UniProtKB-SubCell"/>
</dbReference>
<dbReference type="GO" id="GO:0008514">
    <property type="term" value="F:organic anion transmembrane transporter activity"/>
    <property type="evidence" value="ECO:0007669"/>
    <property type="project" value="UniProtKB-ARBA"/>
</dbReference>
<dbReference type="GO" id="GO:0015293">
    <property type="term" value="F:symporter activity"/>
    <property type="evidence" value="ECO:0007669"/>
    <property type="project" value="UniProtKB-KW"/>
</dbReference>
<dbReference type="GO" id="GO:1905039">
    <property type="term" value="P:carboxylic acid transmembrane transport"/>
    <property type="evidence" value="ECO:0007669"/>
    <property type="project" value="UniProtKB-ARBA"/>
</dbReference>
<dbReference type="GO" id="GO:0006814">
    <property type="term" value="P:sodium ion transport"/>
    <property type="evidence" value="ECO:0007669"/>
    <property type="project" value="UniProtKB-KW"/>
</dbReference>
<dbReference type="CDD" id="cd01115">
    <property type="entry name" value="SLC13_permease"/>
    <property type="match status" value="1"/>
</dbReference>
<dbReference type="InterPro" id="IPR001898">
    <property type="entry name" value="SLC13A/DASS"/>
</dbReference>
<dbReference type="NCBIfam" id="TIGR00785">
    <property type="entry name" value="dass"/>
    <property type="match status" value="1"/>
</dbReference>
<dbReference type="PANTHER" id="PTHR10283">
    <property type="entry name" value="SOLUTE CARRIER FAMILY 13 MEMBER"/>
    <property type="match status" value="1"/>
</dbReference>
<dbReference type="PANTHER" id="PTHR10283:SF82">
    <property type="entry name" value="SOLUTE CARRIER FAMILY 13 MEMBER 2"/>
    <property type="match status" value="1"/>
</dbReference>
<dbReference type="Pfam" id="PF00939">
    <property type="entry name" value="Na_sulph_symp"/>
    <property type="match status" value="1"/>
</dbReference>
<sequence length="519" mass="56978">MNNLNKGDMRRSQYLMFFSNKKENKSYNVGQLVGLILGPLLFVLTLLLFQPDNLSDKGVFVLAITLWIATWWITEAIPIAATSLLPLILLPVGHVLNPEEVSAQYGNDIIFLFLGGFILAIAMERWNLHTRVALRIINTLGTSTGRILLGFMIATGFLSMFVSNTAAVMIMIPIGLAIIKEANELKHGDTKPESISKFEQALVLAIGYAGTIGGLGTLIGTPPLIILKGQYQSAFGEEISFAKWMIIGVPTVIVLLFLVWIYIRYIAFKHDMKTLPGGQDLIRKKLSELGKMKYEEKVVLIVFLLASFLWITREFLLKHWTFTSEVADGTIAMFISVLLFLIPAKNKEKHKRIIDWEVAKDLPWGVLILFGGGLALAKGISESGLANWLGEQLKLIEGVSPLVIVLVITIFVLFLTEITSNTATATMILPILATLSVAVNVHPLLLMVPAAMAANCAYMLPVGTPPNAIVFGTGKISIKKMASVGFWVNLLSIVVIVLVVYFLVPPVLGIDVTQPLPLK</sequence>
<keyword id="KW-1003">Cell membrane</keyword>
<keyword id="KW-0406">Ion transport</keyword>
<keyword id="KW-0472">Membrane</keyword>
<keyword id="KW-1185">Reference proteome</keyword>
<keyword id="KW-0915">Sodium</keyword>
<keyword id="KW-0739">Sodium transport</keyword>
<keyword id="KW-0769">Symport</keyword>
<keyword id="KW-0812">Transmembrane</keyword>
<keyword id="KW-1133">Transmembrane helix</keyword>
<keyword id="KW-0813">Transport</keyword>
<gene>
    <name type="primary">sdcS</name>
    <name type="ordered locus">SSP0875</name>
</gene>
<organism>
    <name type="scientific">Staphylococcus saprophyticus subsp. saprophyticus (strain ATCC 15305 / DSM 20229 / NCIMB 8711 / NCTC 7292 / S-41)</name>
    <dbReference type="NCBI Taxonomy" id="342451"/>
    <lineage>
        <taxon>Bacteria</taxon>
        <taxon>Bacillati</taxon>
        <taxon>Bacillota</taxon>
        <taxon>Bacilli</taxon>
        <taxon>Bacillales</taxon>
        <taxon>Staphylococcaceae</taxon>
        <taxon>Staphylococcus</taxon>
    </lineage>
</organism>
<feature type="chain" id="PRO_0000260100" description="Sodium-dependent dicarboxylate transporter SdcS">
    <location>
        <begin position="1"/>
        <end position="519"/>
    </location>
</feature>
<feature type="transmembrane region" description="Helical" evidence="2">
    <location>
        <begin position="29"/>
        <end position="49"/>
    </location>
</feature>
<feature type="transmembrane region" description="Helical" evidence="2">
    <location>
        <begin position="59"/>
        <end position="79"/>
    </location>
</feature>
<feature type="transmembrane region" description="Helical" evidence="2">
    <location>
        <begin position="103"/>
        <end position="123"/>
    </location>
</feature>
<feature type="transmembrane region" description="Helical" evidence="2">
    <location>
        <begin position="136"/>
        <end position="156"/>
    </location>
</feature>
<feature type="transmembrane region" description="Helical" evidence="2">
    <location>
        <begin position="159"/>
        <end position="179"/>
    </location>
</feature>
<feature type="transmembrane region" description="Helical" evidence="2">
    <location>
        <begin position="201"/>
        <end position="221"/>
    </location>
</feature>
<feature type="transmembrane region" description="Helical" evidence="2">
    <location>
        <begin position="241"/>
        <end position="261"/>
    </location>
</feature>
<feature type="transmembrane region" description="Helical" evidence="2">
    <location>
        <begin position="297"/>
        <end position="317"/>
    </location>
</feature>
<feature type="transmembrane region" description="Helical" evidence="2">
    <location>
        <begin position="322"/>
        <end position="342"/>
    </location>
</feature>
<feature type="transmembrane region" description="Helical" evidence="2">
    <location>
        <begin position="362"/>
        <end position="382"/>
    </location>
</feature>
<feature type="transmembrane region" description="Helical" evidence="2">
    <location>
        <begin position="395"/>
        <end position="415"/>
    </location>
</feature>
<feature type="transmembrane region" description="Helical" evidence="2">
    <location>
        <begin position="428"/>
        <end position="448"/>
    </location>
</feature>
<feature type="transmembrane region" description="Helical" evidence="2">
    <location>
        <begin position="451"/>
        <end position="471"/>
    </location>
</feature>
<feature type="transmembrane region" description="Helical" evidence="2">
    <location>
        <begin position="490"/>
        <end position="510"/>
    </location>
</feature>
<accession>Q49YW0</accession>
<evidence type="ECO:0000250" key="1"/>
<evidence type="ECO:0000255" key="2"/>
<evidence type="ECO:0000305" key="3"/>
<name>SDCS_STAS1</name>
<comment type="function">
    <text evidence="1">Mediates the transport of dicarboxylates across the cytoplasmic membrane via a Na(+)-electrochemical gradient.</text>
</comment>
<comment type="subcellular location">
    <subcellularLocation>
        <location evidence="3">Cell membrane</location>
        <topology evidence="3">Multi-pass membrane protein</topology>
    </subcellularLocation>
</comment>
<comment type="similarity">
    <text evidence="3">Belongs to the SLC13A/DASS transporter (TC 2.A.47) family. NADC subfamily.</text>
</comment>